<sequence>MASGILGSIKEEVTCPICLELLTEPLSLDCGHSFCQACITANHKESMLHQGERSCPLCRLPYQSENLRPNRHLASIVERLREVMLRPEERQNVDHCARHGEKLLLFCEQDGNIICWLCERSQEHRGHNTFLVEEVAQKYREKLQVALETMRQKQQDAEKLEADVRQEQASWKIQIQNDKTNIMAEFKQLRDILDCEESNELQNLEKEEKNILKRLVQSENDMVLQTQSVRVLISDLERRLQGSVVELLQDVDGVIKRIEKVTLQKPKTFLNEKRRVFRAPDLKRMLQVLKELTEVQRYWAHVTLVPSHPSYTIISEDGRQVRYQKPIRHLLVKVQYFYGVLGSPSITSGKHYWEVDVSNKRAWTLGVCVSLKCTANQSVSGTENYQPKNGYWVIGLRNAGNYRAFQSSFEFRDFLAGSRLTLSPPLIVPLFMTICPNRVGVFLDYEARTISFFNVTSNGFLIYKFSDCHFSYPVFPYFNPMTCELPMTLCSPSS</sequence>
<accession>Q5BN31</accession>
<accession>Q5C8U2</accession>
<evidence type="ECO:0000250" key="1"/>
<evidence type="ECO:0000250" key="2">
    <source>
        <dbReference type="UniProtKB" id="Q0PF16"/>
    </source>
</evidence>
<evidence type="ECO:0000250" key="3">
    <source>
        <dbReference type="UniProtKB" id="Q9C035"/>
    </source>
</evidence>
<evidence type="ECO:0000255" key="4"/>
<evidence type="ECO:0000255" key="5">
    <source>
        <dbReference type="PROSITE-ProRule" id="PRU00024"/>
    </source>
</evidence>
<evidence type="ECO:0000255" key="6">
    <source>
        <dbReference type="PROSITE-ProRule" id="PRU00175"/>
    </source>
</evidence>
<evidence type="ECO:0000255" key="7">
    <source>
        <dbReference type="PROSITE-ProRule" id="PRU00548"/>
    </source>
</evidence>
<evidence type="ECO:0000305" key="8"/>
<protein>
    <recommendedName>
        <fullName>Tripartite motif-containing protein 5</fullName>
        <ecNumber>2.3.2.27</ecNumber>
    </recommendedName>
    <alternativeName>
        <fullName evidence="8">RING-type E3 ubiquitin transferase TRIM5</fullName>
    </alternativeName>
    <alternativeName>
        <fullName>TRIM5alpha</fullName>
    </alternativeName>
    <alternativeName>
        <fullName>Tripartite motif-containing antiviral factor</fullName>
    </alternativeName>
</protein>
<feature type="initiator methionine" description="Removed" evidence="3">
    <location>
        <position position="1"/>
    </location>
</feature>
<feature type="chain" id="PRO_0000273476" description="Tripartite motif-containing protein 5">
    <location>
        <begin position="2"/>
        <end position="494"/>
    </location>
</feature>
<feature type="domain" description="B30.2/SPRY" evidence="7">
    <location>
        <begin position="280"/>
        <end position="494"/>
    </location>
</feature>
<feature type="zinc finger region" description="RING-type" evidence="6">
    <location>
        <begin position="15"/>
        <end position="59"/>
    </location>
</feature>
<feature type="zinc finger region" description="B box-type" evidence="5">
    <location>
        <begin position="91"/>
        <end position="132"/>
    </location>
</feature>
<feature type="region of interest" description="Required for interaction with GABARAP and for autophagy" evidence="2">
    <location>
        <begin position="186"/>
        <end position="199"/>
    </location>
</feature>
<feature type="coiled-coil region" evidence="4">
    <location>
        <begin position="132"/>
        <end position="223"/>
    </location>
</feature>
<feature type="binding site" evidence="5">
    <location>
        <position position="96"/>
    </location>
    <ligand>
        <name>Zn(2+)</name>
        <dbReference type="ChEBI" id="CHEBI:29105"/>
    </ligand>
</feature>
<feature type="binding site" evidence="5">
    <location>
        <position position="99"/>
    </location>
    <ligand>
        <name>Zn(2+)</name>
        <dbReference type="ChEBI" id="CHEBI:29105"/>
    </ligand>
</feature>
<feature type="binding site" evidence="5">
    <location>
        <position position="118"/>
    </location>
    <ligand>
        <name>Zn(2+)</name>
        <dbReference type="ChEBI" id="CHEBI:29105"/>
    </ligand>
</feature>
<feature type="binding site" evidence="5">
    <location>
        <position position="124"/>
    </location>
    <ligand>
        <name>Zn(2+)</name>
        <dbReference type="ChEBI" id="CHEBI:29105"/>
    </ligand>
</feature>
<feature type="modified residue" description="N-acetylalanine" evidence="3">
    <location>
        <position position="2"/>
    </location>
</feature>
<feature type="sequence conflict" description="In Ref. 1; AAW72442." evidence="8" ref="1">
    <original>G</original>
    <variation>V</variation>
    <location>
        <position position="7"/>
    </location>
</feature>
<name>TRIM5_SAIBB</name>
<organism>
    <name type="scientific">Saimiri boliviensis boliviensis</name>
    <name type="common">Bolivian squirrel monkey</name>
    <dbReference type="NCBI Taxonomy" id="39432"/>
    <lineage>
        <taxon>Eukaryota</taxon>
        <taxon>Metazoa</taxon>
        <taxon>Chordata</taxon>
        <taxon>Craniata</taxon>
        <taxon>Vertebrata</taxon>
        <taxon>Euteleostomi</taxon>
        <taxon>Mammalia</taxon>
        <taxon>Eutheria</taxon>
        <taxon>Euarchontoglires</taxon>
        <taxon>Primates</taxon>
        <taxon>Haplorrhini</taxon>
        <taxon>Platyrrhini</taxon>
        <taxon>Cebidae</taxon>
        <taxon>Saimiriinae</taxon>
        <taxon>Saimiri</taxon>
    </lineage>
</organism>
<keyword id="KW-0007">Acetylation</keyword>
<keyword id="KW-0051">Antiviral defense</keyword>
<keyword id="KW-0072">Autophagy</keyword>
<keyword id="KW-0175">Coiled coil</keyword>
<keyword id="KW-0963">Cytoplasm</keyword>
<keyword id="KW-0391">Immunity</keyword>
<keyword id="KW-0399">Innate immunity</keyword>
<keyword id="KW-0479">Metal-binding</keyword>
<keyword id="KW-0539">Nucleus</keyword>
<keyword id="KW-1185">Reference proteome</keyword>
<keyword id="KW-0808">Transferase</keyword>
<keyword id="KW-0832">Ubl conjugation</keyword>
<keyword id="KW-0833">Ubl conjugation pathway</keyword>
<keyword id="KW-0862">Zinc</keyword>
<keyword id="KW-0863">Zinc-finger</keyword>
<reference key="1">
    <citation type="journal article" date="2005" name="J. Virol.">
        <title>The B30.2(SPRY) domain of the retroviral restriction factor TRIM5alpha exhibits lineage-specific length and sequence variation in primates.</title>
        <authorList>
            <person name="Song B."/>
            <person name="Gold B."/>
            <person name="O'Huigin C."/>
            <person name="Javanbakht H."/>
            <person name="Li X."/>
            <person name="Stremlau M."/>
            <person name="Winkler C."/>
            <person name="Dean M."/>
            <person name="Sodroski J."/>
        </authorList>
    </citation>
    <scope>NUCLEOTIDE SEQUENCE [MRNA]</scope>
</reference>
<reference key="2">
    <citation type="journal article" date="2005" name="J. Virol.">
        <title>Differential restriction of human immunodeficiency virus type 2 and simian immunodeficiency virus SIVmac by TRIM5alpha alleles.</title>
        <authorList>
            <person name="Ylinen L.M."/>
            <person name="Keckesova Z."/>
            <person name="Wilson S.J."/>
            <person name="Ranasinghe S."/>
            <person name="Towers G.J."/>
        </authorList>
    </citation>
    <scope>NUCLEOTIDE SEQUENCE [MRNA]</scope>
</reference>
<comment type="function">
    <text evidence="3">Capsid-specific restriction factor that prevents infection from non-host-adapted retroviruses. Blocks viral replication early in the life cycle, after viral entry but before reverse transcription. In addition to acting as a capsid-specific restriction factor, also acts as a pattern recognition receptor that activates innate immune signaling in response to the retroviral capsid lattice. Binding to the viral capsid triggers its E3 ubiquitin ligase activity, and in concert with the heterodimeric ubiquitin conjugating enzyme complex UBE2V1-UBE2N (also known as UBC13-UEV1A complex) generates 'Lys-63'-linked polyubiquitin chains, which in turn are catalysts in the autophosphorylation of the MAP3K7/TAK1 complex (includes TAK1, TAB2, and TAB3). Activation of the MAP3K7/TAK1 complex by autophosphorylation results in the induction and expression of NF-kappa-B and MAPK-responsive inflammatory genes, thereby leading to an innate immune response in the infected cell. Plays a role in regulating autophagy through activation of autophagy regulator BECN1 by causing its dissociation from its inhibitors BCL2 and TAB2.</text>
</comment>
<comment type="catalytic activity">
    <reaction>
        <text>S-ubiquitinyl-[E2 ubiquitin-conjugating enzyme]-L-cysteine + [acceptor protein]-L-lysine = [E2 ubiquitin-conjugating enzyme]-L-cysteine + N(6)-ubiquitinyl-[acceptor protein]-L-lysine.</text>
        <dbReference type="EC" id="2.3.2.27"/>
    </reaction>
</comment>
<comment type="pathway">
    <text>Protein modification; protein ubiquitination.</text>
</comment>
<comment type="subunit">
    <text evidence="2 3">Can form homodimers and homotrimers. In addition to lower-order dimerization, also exhibits a higher-order multimerization and both low- and high-order multimerizations are essential for its restriction activity. Interacts with BTBD1 and BTBD2. Interacts with PSMC4, PSMC5, PSMD7 and HSPA8/HSC70. Interacts (via B30.2/SPRY domain) with HSPA1A/B. Interacts with PSMC2, MAP3K7/TAK1, TAB2 and TAB3. Interacts with SQSTM1. Interacts with TRIM6 and TRIM34. Interacts with ULK1 (phosphorylated form), GABARAP, GABARAPL1, GABARAPL2, MAP1LC3A, MAP1LC3C and BECN1.</text>
</comment>
<comment type="subcellular location">
    <subcellularLocation>
        <location evidence="2">Cytoplasm</location>
    </subcellularLocation>
    <subcellularLocation>
        <location evidence="2">Nucleus</location>
    </subcellularLocation>
    <text evidence="2">Predominantly localizes in cytoplasmic bodies. Localization may be influenced by the coexpression of other TRIM proteins, hence partial nuclear localization is observed in the presence of TRIM22 or TRIM27. In cytoplasmic bodies, colocalizes with proteasomal subunits and SQSTM1.</text>
</comment>
<comment type="domain">
    <text evidence="2 3">The B box-type zinc finger domain and the coiled-coil domain contribute to the higher and low order multimerization respectively which is essential for restriction activity. The coiled coil domain is important for higher order multimerization by promoting the initial dimerization.</text>
</comment>
<comment type="domain">
    <text evidence="1">The B30.2/SPRY domain acts as a capsid recognition domain. Polymorphisms in this domain explain the observed species-specific differences among orthologs (By similarity).</text>
</comment>
<comment type="domain">
    <text evidence="1">The RING-type zinc finger domain confers E3 ubiquitin ligase activity and is essential for retrovirus restriction activity, autoubiquitination and higher-order multimerization.</text>
</comment>
<comment type="PTM">
    <text evidence="1">Degraded in a proteasome-independent fashion in the absence of viral infection but in a proteasome-dependent fashion following exposure to restriction sensitive virus.</text>
</comment>
<comment type="PTM">
    <text evidence="1">Autoubiquitinated in a RING finger- and UBE2D2-dependent manner. Monoubiquitinated by TRIM21. Deubiquitinated by Yersinia YopJ. Ubiquitination may not lead to proteasomal degradation (By similarity).</text>
</comment>
<comment type="similarity">
    <text evidence="8">Belongs to the TRIM/RBCC family.</text>
</comment>
<proteinExistence type="evidence at transcript level"/>
<dbReference type="EC" id="2.3.2.27"/>
<dbReference type="EMBL" id="AY740614">
    <property type="protein sequence ID" value="AAW72442.1"/>
    <property type="molecule type" value="mRNA"/>
</dbReference>
<dbReference type="EMBL" id="AY928202">
    <property type="protein sequence ID" value="AAX23597.1"/>
    <property type="molecule type" value="mRNA"/>
</dbReference>
<dbReference type="SMR" id="Q5BN31"/>
<dbReference type="STRING" id="39432.ENSSBOP00000024105"/>
<dbReference type="UniPathway" id="UPA00143"/>
<dbReference type="Proteomes" id="UP000233220">
    <property type="component" value="Whole Genome Shotgun Assembly"/>
</dbReference>
<dbReference type="GO" id="GO:0005634">
    <property type="term" value="C:nucleus"/>
    <property type="evidence" value="ECO:0007669"/>
    <property type="project" value="UniProtKB-SubCell"/>
</dbReference>
<dbReference type="GO" id="GO:0000932">
    <property type="term" value="C:P-body"/>
    <property type="evidence" value="ECO:0000250"/>
    <property type="project" value="UniProtKB"/>
</dbReference>
<dbReference type="GO" id="GO:0038187">
    <property type="term" value="F:pattern recognition receptor activity"/>
    <property type="evidence" value="ECO:0000250"/>
    <property type="project" value="UniProtKB"/>
</dbReference>
<dbReference type="GO" id="GO:0004842">
    <property type="term" value="F:ubiquitin-protein transferase activity"/>
    <property type="evidence" value="ECO:0000250"/>
    <property type="project" value="UniProtKB"/>
</dbReference>
<dbReference type="GO" id="GO:0008270">
    <property type="term" value="F:zinc ion binding"/>
    <property type="evidence" value="ECO:0007669"/>
    <property type="project" value="UniProtKB-KW"/>
</dbReference>
<dbReference type="GO" id="GO:0002218">
    <property type="term" value="P:activation of innate immune response"/>
    <property type="evidence" value="ECO:0000250"/>
    <property type="project" value="UniProtKB"/>
</dbReference>
<dbReference type="GO" id="GO:0006914">
    <property type="term" value="P:autophagy"/>
    <property type="evidence" value="ECO:0007669"/>
    <property type="project" value="UniProtKB-KW"/>
</dbReference>
<dbReference type="GO" id="GO:0051607">
    <property type="term" value="P:defense response to virus"/>
    <property type="evidence" value="ECO:0007669"/>
    <property type="project" value="UniProtKB-KW"/>
</dbReference>
<dbReference type="GO" id="GO:0045087">
    <property type="term" value="P:innate immune response"/>
    <property type="evidence" value="ECO:0007669"/>
    <property type="project" value="UniProtKB-KW"/>
</dbReference>
<dbReference type="GO" id="GO:0043123">
    <property type="term" value="P:positive regulation of canonical NF-kappaB signal transduction"/>
    <property type="evidence" value="ECO:0000250"/>
    <property type="project" value="UniProtKB"/>
</dbReference>
<dbReference type="GO" id="GO:0043410">
    <property type="term" value="P:positive regulation of MAPK cascade"/>
    <property type="evidence" value="ECO:0000250"/>
    <property type="project" value="UniProtKB"/>
</dbReference>
<dbReference type="GO" id="GO:0051092">
    <property type="term" value="P:positive regulation of NF-kappaB transcription factor activity"/>
    <property type="evidence" value="ECO:0000250"/>
    <property type="project" value="UniProtKB"/>
</dbReference>
<dbReference type="GO" id="GO:0070534">
    <property type="term" value="P:protein K63-linked ubiquitination"/>
    <property type="evidence" value="ECO:0000250"/>
    <property type="project" value="UniProtKB"/>
</dbReference>
<dbReference type="GO" id="GO:0031664">
    <property type="term" value="P:regulation of lipopolysaccharide-mediated signaling pathway"/>
    <property type="evidence" value="ECO:0000250"/>
    <property type="project" value="UniProtKB"/>
</dbReference>
<dbReference type="CDD" id="cd19761">
    <property type="entry name" value="Bbox2_TRIM5-like"/>
    <property type="match status" value="1"/>
</dbReference>
<dbReference type="CDD" id="cd16591">
    <property type="entry name" value="RING-HC_TRIM5-like_C-IV"/>
    <property type="match status" value="1"/>
</dbReference>
<dbReference type="CDD" id="cd15822">
    <property type="entry name" value="SPRY_PRY_TRIM5"/>
    <property type="match status" value="1"/>
</dbReference>
<dbReference type="FunFam" id="2.60.120.920:FF:000023">
    <property type="entry name" value="Tripartite motif-containing 5 (Predicted)"/>
    <property type="match status" value="1"/>
</dbReference>
<dbReference type="FunFam" id="3.30.160.60:FF:000386">
    <property type="entry name" value="Tripartite motif-containing 5 (Predicted)"/>
    <property type="match status" value="1"/>
</dbReference>
<dbReference type="FunFam" id="3.30.40.10:FF:000144">
    <property type="entry name" value="Tripartite motif-containing 5 (Predicted)"/>
    <property type="match status" value="1"/>
</dbReference>
<dbReference type="Gene3D" id="2.60.120.920">
    <property type="match status" value="1"/>
</dbReference>
<dbReference type="Gene3D" id="3.30.160.60">
    <property type="entry name" value="Classic Zinc Finger"/>
    <property type="match status" value="1"/>
</dbReference>
<dbReference type="Gene3D" id="3.30.40.10">
    <property type="entry name" value="Zinc/RING finger domain, C3HC4 (zinc finger)"/>
    <property type="match status" value="1"/>
</dbReference>
<dbReference type="InterPro" id="IPR001870">
    <property type="entry name" value="B30.2/SPRY"/>
</dbReference>
<dbReference type="InterPro" id="IPR043136">
    <property type="entry name" value="B30.2/SPRY_sf"/>
</dbReference>
<dbReference type="InterPro" id="IPR003879">
    <property type="entry name" value="Butyrophylin_SPRY"/>
</dbReference>
<dbReference type="InterPro" id="IPR013320">
    <property type="entry name" value="ConA-like_dom_sf"/>
</dbReference>
<dbReference type="InterPro" id="IPR003877">
    <property type="entry name" value="SPRY_dom"/>
</dbReference>
<dbReference type="InterPro" id="IPR050143">
    <property type="entry name" value="TRIM/RBCC"/>
</dbReference>
<dbReference type="InterPro" id="IPR027370">
    <property type="entry name" value="Znf-RING_euk"/>
</dbReference>
<dbReference type="InterPro" id="IPR000315">
    <property type="entry name" value="Znf_B-box"/>
</dbReference>
<dbReference type="InterPro" id="IPR001841">
    <property type="entry name" value="Znf_RING"/>
</dbReference>
<dbReference type="InterPro" id="IPR013083">
    <property type="entry name" value="Znf_RING/FYVE/PHD"/>
</dbReference>
<dbReference type="InterPro" id="IPR017907">
    <property type="entry name" value="Znf_RING_CS"/>
</dbReference>
<dbReference type="PANTHER" id="PTHR24103">
    <property type="entry name" value="E3 UBIQUITIN-PROTEIN LIGASE TRIM"/>
    <property type="match status" value="1"/>
</dbReference>
<dbReference type="Pfam" id="PF00622">
    <property type="entry name" value="SPRY"/>
    <property type="match status" value="1"/>
</dbReference>
<dbReference type="Pfam" id="PF00643">
    <property type="entry name" value="zf-B_box"/>
    <property type="match status" value="1"/>
</dbReference>
<dbReference type="Pfam" id="PF13445">
    <property type="entry name" value="zf-RING_UBOX"/>
    <property type="match status" value="1"/>
</dbReference>
<dbReference type="PRINTS" id="PR01407">
    <property type="entry name" value="BUTYPHLNCDUF"/>
</dbReference>
<dbReference type="SMART" id="SM00336">
    <property type="entry name" value="BBOX"/>
    <property type="match status" value="1"/>
</dbReference>
<dbReference type="SMART" id="SM00184">
    <property type="entry name" value="RING"/>
    <property type="match status" value="1"/>
</dbReference>
<dbReference type="SMART" id="SM00449">
    <property type="entry name" value="SPRY"/>
    <property type="match status" value="1"/>
</dbReference>
<dbReference type="SUPFAM" id="SSF57845">
    <property type="entry name" value="B-box zinc-binding domain"/>
    <property type="match status" value="1"/>
</dbReference>
<dbReference type="SUPFAM" id="SSF49899">
    <property type="entry name" value="Concanavalin A-like lectins/glucanases"/>
    <property type="match status" value="1"/>
</dbReference>
<dbReference type="SUPFAM" id="SSF57850">
    <property type="entry name" value="RING/U-box"/>
    <property type="match status" value="1"/>
</dbReference>
<dbReference type="PROSITE" id="PS50188">
    <property type="entry name" value="B302_SPRY"/>
    <property type="match status" value="1"/>
</dbReference>
<dbReference type="PROSITE" id="PS50119">
    <property type="entry name" value="ZF_BBOX"/>
    <property type="match status" value="1"/>
</dbReference>
<dbReference type="PROSITE" id="PS00518">
    <property type="entry name" value="ZF_RING_1"/>
    <property type="match status" value="1"/>
</dbReference>
<dbReference type="PROSITE" id="PS50089">
    <property type="entry name" value="ZF_RING_2"/>
    <property type="match status" value="1"/>
</dbReference>
<gene>
    <name type="primary">TRIM5</name>
</gene>